<name>RLMN1_MYXXD</name>
<protein>
    <recommendedName>
        <fullName evidence="1">Dual-specificity RNA methyltransferase RlmN 1</fullName>
        <ecNumber evidence="1">2.1.1.192</ecNumber>
    </recommendedName>
    <alternativeName>
        <fullName evidence="1">23S rRNA (adenine(2503)-C(2))-methyltransferase 1</fullName>
    </alternativeName>
    <alternativeName>
        <fullName evidence="1">23S rRNA m2A2503 methyltransferase 1</fullName>
    </alternativeName>
    <alternativeName>
        <fullName evidence="1">Ribosomal RNA large subunit methyltransferase N 1</fullName>
    </alternativeName>
    <alternativeName>
        <fullName evidence="1">tRNA (adenine(37)-C(2))-methyltransferase 1</fullName>
    </alternativeName>
    <alternativeName>
        <fullName evidence="1">tRNA m2A37 methyltransferase 1</fullName>
    </alternativeName>
</protein>
<proteinExistence type="inferred from homology"/>
<keyword id="KW-0004">4Fe-4S</keyword>
<keyword id="KW-0963">Cytoplasm</keyword>
<keyword id="KW-1015">Disulfide bond</keyword>
<keyword id="KW-0408">Iron</keyword>
<keyword id="KW-0411">Iron-sulfur</keyword>
<keyword id="KW-0479">Metal-binding</keyword>
<keyword id="KW-0489">Methyltransferase</keyword>
<keyword id="KW-1185">Reference proteome</keyword>
<keyword id="KW-0698">rRNA processing</keyword>
<keyword id="KW-0949">S-adenosyl-L-methionine</keyword>
<keyword id="KW-0808">Transferase</keyword>
<keyword id="KW-0819">tRNA processing</keyword>
<sequence length="359" mass="39739">MPSDTSANLYDLTRPALGALLSGWGFGPYHRDQLWTALYRRHATTFDELDGLKPELLRMLREHTRLGQLATHHESFSSDGFTHKLLLRLDDGQTIETVLMRFKGRATVCISTQAGCAMGCVFCATGQMGLSRHLTPGEIVGQILHVNRILRASGETLRNVVLMGMGEPLHNYEHTMSAVDVLVDALGLAMGPRFITLSTVGVVPGIRRLADEERPIHLAVSLHGATDAERAALVPAGRRWPLDELMDACRYYSEKRKRRIFFEWTLISGRNDTAEHAHTLGQLLRGMDAHVNVIPLNPTVGYDGGPSRPESVRAFQDVLATYDVPSTVRQRRGIDIDAGCGQLKATVERRSRRSLPTSA</sequence>
<feature type="chain" id="PRO_0000350272" description="Dual-specificity RNA methyltransferase RlmN 1">
    <location>
        <begin position="1"/>
        <end position="359"/>
    </location>
</feature>
<feature type="domain" description="Radical SAM core" evidence="2">
    <location>
        <begin position="102"/>
        <end position="335"/>
    </location>
</feature>
<feature type="active site" description="Proton acceptor" evidence="1">
    <location>
        <position position="96"/>
    </location>
</feature>
<feature type="active site" description="S-methylcysteine intermediate" evidence="1">
    <location>
        <position position="340"/>
    </location>
</feature>
<feature type="binding site" evidence="1">
    <location>
        <position position="116"/>
    </location>
    <ligand>
        <name>[4Fe-4S] cluster</name>
        <dbReference type="ChEBI" id="CHEBI:49883"/>
        <note>4Fe-4S-S-AdoMet</note>
    </ligand>
</feature>
<feature type="binding site" evidence="1">
    <location>
        <position position="120"/>
    </location>
    <ligand>
        <name>[4Fe-4S] cluster</name>
        <dbReference type="ChEBI" id="CHEBI:49883"/>
        <note>4Fe-4S-S-AdoMet</note>
    </ligand>
</feature>
<feature type="binding site" evidence="1">
    <location>
        <position position="123"/>
    </location>
    <ligand>
        <name>[4Fe-4S] cluster</name>
        <dbReference type="ChEBI" id="CHEBI:49883"/>
        <note>4Fe-4S-S-AdoMet</note>
    </ligand>
</feature>
<feature type="binding site" evidence="1">
    <location>
        <begin position="166"/>
        <end position="167"/>
    </location>
    <ligand>
        <name>S-adenosyl-L-methionine</name>
        <dbReference type="ChEBI" id="CHEBI:59789"/>
    </ligand>
</feature>
<feature type="binding site" evidence="1">
    <location>
        <position position="198"/>
    </location>
    <ligand>
        <name>S-adenosyl-L-methionine</name>
        <dbReference type="ChEBI" id="CHEBI:59789"/>
    </ligand>
</feature>
<feature type="binding site" evidence="1">
    <location>
        <begin position="221"/>
        <end position="223"/>
    </location>
    <ligand>
        <name>S-adenosyl-L-methionine</name>
        <dbReference type="ChEBI" id="CHEBI:59789"/>
    </ligand>
</feature>
<feature type="binding site" evidence="1">
    <location>
        <position position="297"/>
    </location>
    <ligand>
        <name>S-adenosyl-L-methionine</name>
        <dbReference type="ChEBI" id="CHEBI:59789"/>
    </ligand>
</feature>
<feature type="disulfide bond" description="(transient)" evidence="1">
    <location>
        <begin position="109"/>
        <end position="340"/>
    </location>
</feature>
<gene>
    <name evidence="1" type="primary">rlmN1</name>
    <name type="ordered locus">MXAN_1275</name>
</gene>
<reference key="1">
    <citation type="journal article" date="2006" name="Proc. Natl. Acad. Sci. U.S.A.">
        <title>Evolution of sensory complexity recorded in a myxobacterial genome.</title>
        <authorList>
            <person name="Goldman B.S."/>
            <person name="Nierman W.C."/>
            <person name="Kaiser D."/>
            <person name="Slater S.C."/>
            <person name="Durkin A.S."/>
            <person name="Eisen J.A."/>
            <person name="Ronning C.M."/>
            <person name="Barbazuk W.B."/>
            <person name="Blanchard M."/>
            <person name="Field C."/>
            <person name="Halling C."/>
            <person name="Hinkle G."/>
            <person name="Iartchuk O."/>
            <person name="Kim H.S."/>
            <person name="Mackenzie C."/>
            <person name="Madupu R."/>
            <person name="Miller N."/>
            <person name="Shvartsbeyn A."/>
            <person name="Sullivan S.A."/>
            <person name="Vaudin M."/>
            <person name="Wiegand R."/>
            <person name="Kaplan H.B."/>
        </authorList>
    </citation>
    <scope>NUCLEOTIDE SEQUENCE [LARGE SCALE GENOMIC DNA]</scope>
    <source>
        <strain>DK1622</strain>
    </source>
</reference>
<comment type="function">
    <text evidence="1">Specifically methylates position 2 of adenine 2503 in 23S rRNA and position 2 of adenine 37 in tRNAs. m2A2503 modification seems to play a crucial role in the proofreading step occurring at the peptidyl transferase center and thus would serve to optimize ribosomal fidelity.</text>
</comment>
<comment type="catalytic activity">
    <reaction evidence="1">
        <text>adenosine(2503) in 23S rRNA + 2 reduced [2Fe-2S]-[ferredoxin] + 2 S-adenosyl-L-methionine = 2-methyladenosine(2503) in 23S rRNA + 5'-deoxyadenosine + L-methionine + 2 oxidized [2Fe-2S]-[ferredoxin] + S-adenosyl-L-homocysteine</text>
        <dbReference type="Rhea" id="RHEA:42916"/>
        <dbReference type="Rhea" id="RHEA-COMP:10000"/>
        <dbReference type="Rhea" id="RHEA-COMP:10001"/>
        <dbReference type="Rhea" id="RHEA-COMP:10152"/>
        <dbReference type="Rhea" id="RHEA-COMP:10282"/>
        <dbReference type="ChEBI" id="CHEBI:17319"/>
        <dbReference type="ChEBI" id="CHEBI:33737"/>
        <dbReference type="ChEBI" id="CHEBI:33738"/>
        <dbReference type="ChEBI" id="CHEBI:57844"/>
        <dbReference type="ChEBI" id="CHEBI:57856"/>
        <dbReference type="ChEBI" id="CHEBI:59789"/>
        <dbReference type="ChEBI" id="CHEBI:74411"/>
        <dbReference type="ChEBI" id="CHEBI:74497"/>
        <dbReference type="EC" id="2.1.1.192"/>
    </reaction>
</comment>
<comment type="catalytic activity">
    <reaction evidence="1">
        <text>adenosine(37) in tRNA + 2 reduced [2Fe-2S]-[ferredoxin] + 2 S-adenosyl-L-methionine = 2-methyladenosine(37) in tRNA + 5'-deoxyadenosine + L-methionine + 2 oxidized [2Fe-2S]-[ferredoxin] + S-adenosyl-L-homocysteine</text>
        <dbReference type="Rhea" id="RHEA:43332"/>
        <dbReference type="Rhea" id="RHEA-COMP:10000"/>
        <dbReference type="Rhea" id="RHEA-COMP:10001"/>
        <dbReference type="Rhea" id="RHEA-COMP:10162"/>
        <dbReference type="Rhea" id="RHEA-COMP:10485"/>
        <dbReference type="ChEBI" id="CHEBI:17319"/>
        <dbReference type="ChEBI" id="CHEBI:33737"/>
        <dbReference type="ChEBI" id="CHEBI:33738"/>
        <dbReference type="ChEBI" id="CHEBI:57844"/>
        <dbReference type="ChEBI" id="CHEBI:57856"/>
        <dbReference type="ChEBI" id="CHEBI:59789"/>
        <dbReference type="ChEBI" id="CHEBI:74411"/>
        <dbReference type="ChEBI" id="CHEBI:74497"/>
        <dbReference type="EC" id="2.1.1.192"/>
    </reaction>
</comment>
<comment type="cofactor">
    <cofactor evidence="1">
        <name>[4Fe-4S] cluster</name>
        <dbReference type="ChEBI" id="CHEBI:49883"/>
    </cofactor>
    <text evidence="1">Binds 1 [4Fe-4S] cluster. The cluster is coordinated with 3 cysteines and an exchangeable S-adenosyl-L-methionine.</text>
</comment>
<comment type="subcellular location">
    <subcellularLocation>
        <location evidence="1">Cytoplasm</location>
    </subcellularLocation>
</comment>
<comment type="miscellaneous">
    <text evidence="1">Reaction proceeds by a ping-pong mechanism involving intermediate methylation of a conserved cysteine residue.</text>
</comment>
<comment type="similarity">
    <text evidence="1">Belongs to the radical SAM superfamily. RlmN family.</text>
</comment>
<organism>
    <name type="scientific">Myxococcus xanthus (strain DK1622)</name>
    <dbReference type="NCBI Taxonomy" id="246197"/>
    <lineage>
        <taxon>Bacteria</taxon>
        <taxon>Pseudomonadati</taxon>
        <taxon>Myxococcota</taxon>
        <taxon>Myxococcia</taxon>
        <taxon>Myxococcales</taxon>
        <taxon>Cystobacterineae</taxon>
        <taxon>Myxococcaceae</taxon>
        <taxon>Myxococcus</taxon>
    </lineage>
</organism>
<accession>Q1DCU1</accession>
<evidence type="ECO:0000255" key="1">
    <source>
        <dbReference type="HAMAP-Rule" id="MF_01849"/>
    </source>
</evidence>
<evidence type="ECO:0000255" key="2">
    <source>
        <dbReference type="PROSITE-ProRule" id="PRU01266"/>
    </source>
</evidence>
<dbReference type="EC" id="2.1.1.192" evidence="1"/>
<dbReference type="EMBL" id="CP000113">
    <property type="protein sequence ID" value="ABF89388.1"/>
    <property type="molecule type" value="Genomic_DNA"/>
</dbReference>
<dbReference type="RefSeq" id="WP_011551392.1">
    <property type="nucleotide sequence ID" value="NC_008095.1"/>
</dbReference>
<dbReference type="SMR" id="Q1DCU1"/>
<dbReference type="STRING" id="246197.MXAN_1275"/>
<dbReference type="EnsemblBacteria" id="ABF89388">
    <property type="protein sequence ID" value="ABF89388"/>
    <property type="gene ID" value="MXAN_1275"/>
</dbReference>
<dbReference type="GeneID" id="41358721"/>
<dbReference type="KEGG" id="mxa:MXAN_1275"/>
<dbReference type="eggNOG" id="COG0820">
    <property type="taxonomic scope" value="Bacteria"/>
</dbReference>
<dbReference type="HOGENOM" id="CLU_029101_2_0_7"/>
<dbReference type="OrthoDB" id="9793973at2"/>
<dbReference type="Proteomes" id="UP000002402">
    <property type="component" value="Chromosome"/>
</dbReference>
<dbReference type="GO" id="GO:0005737">
    <property type="term" value="C:cytoplasm"/>
    <property type="evidence" value="ECO:0007669"/>
    <property type="project" value="UniProtKB-SubCell"/>
</dbReference>
<dbReference type="GO" id="GO:0051539">
    <property type="term" value="F:4 iron, 4 sulfur cluster binding"/>
    <property type="evidence" value="ECO:0007669"/>
    <property type="project" value="UniProtKB-UniRule"/>
</dbReference>
<dbReference type="GO" id="GO:0046872">
    <property type="term" value="F:metal ion binding"/>
    <property type="evidence" value="ECO:0007669"/>
    <property type="project" value="UniProtKB-KW"/>
</dbReference>
<dbReference type="GO" id="GO:0070040">
    <property type="term" value="F:rRNA (adenine(2503)-C2-)-methyltransferase activity"/>
    <property type="evidence" value="ECO:0007669"/>
    <property type="project" value="UniProtKB-UniRule"/>
</dbReference>
<dbReference type="GO" id="GO:0019843">
    <property type="term" value="F:rRNA binding"/>
    <property type="evidence" value="ECO:0007669"/>
    <property type="project" value="UniProtKB-UniRule"/>
</dbReference>
<dbReference type="GO" id="GO:0002935">
    <property type="term" value="F:tRNA (adenine(37)-C2)-methyltransferase activity"/>
    <property type="evidence" value="ECO:0007669"/>
    <property type="project" value="UniProtKB-UniRule"/>
</dbReference>
<dbReference type="GO" id="GO:0000049">
    <property type="term" value="F:tRNA binding"/>
    <property type="evidence" value="ECO:0007669"/>
    <property type="project" value="UniProtKB-UniRule"/>
</dbReference>
<dbReference type="GO" id="GO:0070475">
    <property type="term" value="P:rRNA base methylation"/>
    <property type="evidence" value="ECO:0007669"/>
    <property type="project" value="UniProtKB-UniRule"/>
</dbReference>
<dbReference type="GO" id="GO:0030488">
    <property type="term" value="P:tRNA methylation"/>
    <property type="evidence" value="ECO:0007669"/>
    <property type="project" value="UniProtKB-UniRule"/>
</dbReference>
<dbReference type="CDD" id="cd01335">
    <property type="entry name" value="Radical_SAM"/>
    <property type="match status" value="1"/>
</dbReference>
<dbReference type="FunFam" id="3.20.20.70:FF:000014">
    <property type="entry name" value="Probable dual-specificity RNA methyltransferase RlmN"/>
    <property type="match status" value="1"/>
</dbReference>
<dbReference type="Gene3D" id="1.10.150.530">
    <property type="match status" value="1"/>
</dbReference>
<dbReference type="Gene3D" id="3.20.20.70">
    <property type="entry name" value="Aldolase class I"/>
    <property type="match status" value="1"/>
</dbReference>
<dbReference type="HAMAP" id="MF_01849">
    <property type="entry name" value="RNA_methyltr_RlmN"/>
    <property type="match status" value="1"/>
</dbReference>
<dbReference type="InterPro" id="IPR013785">
    <property type="entry name" value="Aldolase_TIM"/>
</dbReference>
<dbReference type="InterPro" id="IPR040072">
    <property type="entry name" value="Methyltransferase_A"/>
</dbReference>
<dbReference type="InterPro" id="IPR027492">
    <property type="entry name" value="RNA_MTrfase_RlmN"/>
</dbReference>
<dbReference type="InterPro" id="IPR004383">
    <property type="entry name" value="rRNA_lsu_MTrfase_RlmN/Cfr"/>
</dbReference>
<dbReference type="InterPro" id="IPR007197">
    <property type="entry name" value="rSAM"/>
</dbReference>
<dbReference type="NCBIfam" id="TIGR00048">
    <property type="entry name" value="rRNA_mod_RlmN"/>
    <property type="match status" value="1"/>
</dbReference>
<dbReference type="PANTHER" id="PTHR30544">
    <property type="entry name" value="23S RRNA METHYLTRANSFERASE"/>
    <property type="match status" value="1"/>
</dbReference>
<dbReference type="PANTHER" id="PTHR30544:SF5">
    <property type="entry name" value="RADICAL SAM CORE DOMAIN-CONTAINING PROTEIN"/>
    <property type="match status" value="1"/>
</dbReference>
<dbReference type="Pfam" id="PF04055">
    <property type="entry name" value="Radical_SAM"/>
    <property type="match status" value="1"/>
</dbReference>
<dbReference type="PIRSF" id="PIRSF006004">
    <property type="entry name" value="CHP00048"/>
    <property type="match status" value="1"/>
</dbReference>
<dbReference type="SFLD" id="SFLDF00275">
    <property type="entry name" value="adenosine_C2_methyltransferase"/>
    <property type="match status" value="1"/>
</dbReference>
<dbReference type="SFLD" id="SFLDS00029">
    <property type="entry name" value="Radical_SAM"/>
    <property type="match status" value="1"/>
</dbReference>
<dbReference type="SUPFAM" id="SSF102114">
    <property type="entry name" value="Radical SAM enzymes"/>
    <property type="match status" value="1"/>
</dbReference>
<dbReference type="PROSITE" id="PS51918">
    <property type="entry name" value="RADICAL_SAM"/>
    <property type="match status" value="1"/>
</dbReference>